<keyword id="KW-1185">Reference proteome</keyword>
<keyword id="KW-0687">Ribonucleoprotein</keyword>
<keyword id="KW-0689">Ribosomal protein</keyword>
<keyword id="KW-0694">RNA-binding</keyword>
<keyword id="KW-0699">rRNA-binding</keyword>
<reference key="1">
    <citation type="journal article" date="2005" name="Arch. Microbiol.">
        <title>The genome sequence of an anaerobic aromatic-degrading denitrifying bacterium, strain EbN1.</title>
        <authorList>
            <person name="Rabus R."/>
            <person name="Kube M."/>
            <person name="Heider J."/>
            <person name="Beck A."/>
            <person name="Heitmann K."/>
            <person name="Widdel F."/>
            <person name="Reinhardt R."/>
        </authorList>
    </citation>
    <scope>NUCLEOTIDE SEQUENCE [LARGE SCALE GENOMIC DNA]</scope>
    <source>
        <strain>DSM 19018 / LMG 30748 / EbN1</strain>
    </source>
</reference>
<dbReference type="EMBL" id="CR555306">
    <property type="protein sequence ID" value="CAI08293.1"/>
    <property type="molecule type" value="Genomic_DNA"/>
</dbReference>
<dbReference type="RefSeq" id="WP_011237983.1">
    <property type="nucleotide sequence ID" value="NC_006513.1"/>
</dbReference>
<dbReference type="SMR" id="Q5P321"/>
<dbReference type="STRING" id="76114.ebB128"/>
<dbReference type="KEGG" id="eba:ebB128"/>
<dbReference type="eggNOG" id="COG0198">
    <property type="taxonomic scope" value="Bacteria"/>
</dbReference>
<dbReference type="HOGENOM" id="CLU_093315_2_2_4"/>
<dbReference type="OrthoDB" id="9807419at2"/>
<dbReference type="Proteomes" id="UP000006552">
    <property type="component" value="Chromosome"/>
</dbReference>
<dbReference type="GO" id="GO:1990904">
    <property type="term" value="C:ribonucleoprotein complex"/>
    <property type="evidence" value="ECO:0007669"/>
    <property type="project" value="UniProtKB-KW"/>
</dbReference>
<dbReference type="GO" id="GO:0005840">
    <property type="term" value="C:ribosome"/>
    <property type="evidence" value="ECO:0007669"/>
    <property type="project" value="UniProtKB-KW"/>
</dbReference>
<dbReference type="GO" id="GO:0019843">
    <property type="term" value="F:rRNA binding"/>
    <property type="evidence" value="ECO:0007669"/>
    <property type="project" value="UniProtKB-UniRule"/>
</dbReference>
<dbReference type="GO" id="GO:0003735">
    <property type="term" value="F:structural constituent of ribosome"/>
    <property type="evidence" value="ECO:0007669"/>
    <property type="project" value="InterPro"/>
</dbReference>
<dbReference type="GO" id="GO:0006412">
    <property type="term" value="P:translation"/>
    <property type="evidence" value="ECO:0007669"/>
    <property type="project" value="UniProtKB-UniRule"/>
</dbReference>
<dbReference type="CDD" id="cd06089">
    <property type="entry name" value="KOW_RPL26"/>
    <property type="match status" value="1"/>
</dbReference>
<dbReference type="FunFam" id="2.30.30.30:FF:000004">
    <property type="entry name" value="50S ribosomal protein L24"/>
    <property type="match status" value="1"/>
</dbReference>
<dbReference type="Gene3D" id="2.30.30.30">
    <property type="match status" value="1"/>
</dbReference>
<dbReference type="HAMAP" id="MF_01326_B">
    <property type="entry name" value="Ribosomal_uL24_B"/>
    <property type="match status" value="1"/>
</dbReference>
<dbReference type="InterPro" id="IPR005824">
    <property type="entry name" value="KOW"/>
</dbReference>
<dbReference type="InterPro" id="IPR014722">
    <property type="entry name" value="Rib_uL2_dom2"/>
</dbReference>
<dbReference type="InterPro" id="IPR003256">
    <property type="entry name" value="Ribosomal_uL24"/>
</dbReference>
<dbReference type="InterPro" id="IPR005825">
    <property type="entry name" value="Ribosomal_uL24_CS"/>
</dbReference>
<dbReference type="InterPro" id="IPR041988">
    <property type="entry name" value="Ribosomal_uL24_KOW"/>
</dbReference>
<dbReference type="InterPro" id="IPR008991">
    <property type="entry name" value="Translation_prot_SH3-like_sf"/>
</dbReference>
<dbReference type="NCBIfam" id="TIGR01079">
    <property type="entry name" value="rplX_bact"/>
    <property type="match status" value="1"/>
</dbReference>
<dbReference type="PANTHER" id="PTHR12903">
    <property type="entry name" value="MITOCHONDRIAL RIBOSOMAL PROTEIN L24"/>
    <property type="match status" value="1"/>
</dbReference>
<dbReference type="Pfam" id="PF00467">
    <property type="entry name" value="KOW"/>
    <property type="match status" value="1"/>
</dbReference>
<dbReference type="Pfam" id="PF17136">
    <property type="entry name" value="ribosomal_L24"/>
    <property type="match status" value="1"/>
</dbReference>
<dbReference type="SMART" id="SM00739">
    <property type="entry name" value="KOW"/>
    <property type="match status" value="1"/>
</dbReference>
<dbReference type="SUPFAM" id="SSF50104">
    <property type="entry name" value="Translation proteins SH3-like domain"/>
    <property type="match status" value="1"/>
</dbReference>
<dbReference type="PROSITE" id="PS01108">
    <property type="entry name" value="RIBOSOMAL_L24"/>
    <property type="match status" value="1"/>
</dbReference>
<sequence>MNKIRKGDEVVVLAGKDRGRRGVVLSRVDDERLLVEGVNRVKKHVRPNPLKGEVGGIVEKEMPLHISNVALFNPAAQKGDRVGIRVLEDGRKVRFFKSNGELVDA</sequence>
<accession>Q5P321</accession>
<name>RL24_AROAE</name>
<feature type="chain" id="PRO_0000241561" description="Large ribosomal subunit protein uL24">
    <location>
        <begin position="1"/>
        <end position="105"/>
    </location>
</feature>
<comment type="function">
    <text evidence="1">One of two assembly initiator proteins, it binds directly to the 5'-end of the 23S rRNA, where it nucleates assembly of the 50S subunit.</text>
</comment>
<comment type="function">
    <text evidence="1">One of the proteins that surrounds the polypeptide exit tunnel on the outside of the subunit.</text>
</comment>
<comment type="subunit">
    <text evidence="1">Part of the 50S ribosomal subunit.</text>
</comment>
<comment type="similarity">
    <text evidence="1">Belongs to the universal ribosomal protein uL24 family.</text>
</comment>
<gene>
    <name evidence="1" type="primary">rplX</name>
    <name type="ordered locus">AZOSEA21680</name>
    <name type="ORF">ebB128</name>
</gene>
<organism>
    <name type="scientific">Aromatoleum aromaticum (strain DSM 19018 / LMG 30748 / EbN1)</name>
    <name type="common">Azoarcus sp. (strain EbN1)</name>
    <dbReference type="NCBI Taxonomy" id="76114"/>
    <lineage>
        <taxon>Bacteria</taxon>
        <taxon>Pseudomonadati</taxon>
        <taxon>Pseudomonadota</taxon>
        <taxon>Betaproteobacteria</taxon>
        <taxon>Rhodocyclales</taxon>
        <taxon>Rhodocyclaceae</taxon>
        <taxon>Aromatoleum</taxon>
    </lineage>
</organism>
<protein>
    <recommendedName>
        <fullName evidence="1">Large ribosomal subunit protein uL24</fullName>
    </recommendedName>
    <alternativeName>
        <fullName evidence="2">50S ribosomal protein L24</fullName>
    </alternativeName>
</protein>
<proteinExistence type="inferred from homology"/>
<evidence type="ECO:0000255" key="1">
    <source>
        <dbReference type="HAMAP-Rule" id="MF_01326"/>
    </source>
</evidence>
<evidence type="ECO:0000305" key="2"/>